<accession>B8FQR7</accession>
<keyword id="KW-0030">Aminoacyl-tRNA synthetase</keyword>
<keyword id="KW-0067">ATP-binding</keyword>
<keyword id="KW-0963">Cytoplasm</keyword>
<keyword id="KW-0436">Ligase</keyword>
<keyword id="KW-0547">Nucleotide-binding</keyword>
<keyword id="KW-0648">Protein biosynthesis</keyword>
<sequence>MAIQRPKGTQDLLPGVVEQWQDLEEQIRKICREYGYQEIRTPIFEATELFQRGVGETTDIVNKEMYTFLDKGDRSITLRPEGTASVCRAYVENKLHGGPQPVKLYYIGPMFRYERPQSGRFRQFHQFGVEVLGVDKPMVDAEVITLVWDLYSRLGLKGLEVHVNSVGCPSCRPEHKKKLQEFLAPRQEQLCKDCQSRFEKNPLRILDCKNPTCQEITQGAPTTLDTLCEECAEHFKELQSLLSAAEVVYKVNPRLVRGLDYYRKTAFEVLVEDIGAQSAICGGGRYDGLVQEVGGPPTPGIGFAMGMERVLAARKLAQGEQEGEGKEYLMLVALGDQAQREGFAIVSRLRKQGMPAGIDLLGRSLKAQLKAADRVQAHYAAILGEEELHKGIIILRDLRLGEQVELPLQDFEEVVWKRYKEDGN</sequence>
<gene>
    <name evidence="1" type="primary">hisS</name>
    <name type="ordered locus">Dhaf_3587</name>
</gene>
<feature type="chain" id="PRO_1000199126" description="Histidine--tRNA ligase">
    <location>
        <begin position="1"/>
        <end position="424"/>
    </location>
</feature>
<dbReference type="EC" id="6.1.1.21" evidence="1"/>
<dbReference type="EMBL" id="CP001336">
    <property type="protein sequence ID" value="ACL21604.1"/>
    <property type="molecule type" value="Genomic_DNA"/>
</dbReference>
<dbReference type="RefSeq" id="WP_011460333.1">
    <property type="nucleotide sequence ID" value="NC_011830.1"/>
</dbReference>
<dbReference type="SMR" id="B8FQR7"/>
<dbReference type="KEGG" id="dhd:Dhaf_3587"/>
<dbReference type="HOGENOM" id="CLU_025113_1_1_9"/>
<dbReference type="Proteomes" id="UP000007726">
    <property type="component" value="Chromosome"/>
</dbReference>
<dbReference type="GO" id="GO:0005737">
    <property type="term" value="C:cytoplasm"/>
    <property type="evidence" value="ECO:0007669"/>
    <property type="project" value="UniProtKB-SubCell"/>
</dbReference>
<dbReference type="GO" id="GO:0005524">
    <property type="term" value="F:ATP binding"/>
    <property type="evidence" value="ECO:0007669"/>
    <property type="project" value="UniProtKB-UniRule"/>
</dbReference>
<dbReference type="GO" id="GO:0140096">
    <property type="term" value="F:catalytic activity, acting on a protein"/>
    <property type="evidence" value="ECO:0007669"/>
    <property type="project" value="UniProtKB-ARBA"/>
</dbReference>
<dbReference type="GO" id="GO:0004821">
    <property type="term" value="F:histidine-tRNA ligase activity"/>
    <property type="evidence" value="ECO:0007669"/>
    <property type="project" value="UniProtKB-UniRule"/>
</dbReference>
<dbReference type="GO" id="GO:0016740">
    <property type="term" value="F:transferase activity"/>
    <property type="evidence" value="ECO:0007669"/>
    <property type="project" value="UniProtKB-ARBA"/>
</dbReference>
<dbReference type="GO" id="GO:0006427">
    <property type="term" value="P:histidyl-tRNA aminoacylation"/>
    <property type="evidence" value="ECO:0007669"/>
    <property type="project" value="UniProtKB-UniRule"/>
</dbReference>
<dbReference type="CDD" id="cd00773">
    <property type="entry name" value="HisRS-like_core"/>
    <property type="match status" value="1"/>
</dbReference>
<dbReference type="CDD" id="cd00859">
    <property type="entry name" value="HisRS_anticodon"/>
    <property type="match status" value="1"/>
</dbReference>
<dbReference type="FunFam" id="3.30.930.10:FF:000005">
    <property type="entry name" value="Histidine--tRNA ligase"/>
    <property type="match status" value="1"/>
</dbReference>
<dbReference type="Gene3D" id="3.40.50.800">
    <property type="entry name" value="Anticodon-binding domain"/>
    <property type="match status" value="1"/>
</dbReference>
<dbReference type="Gene3D" id="3.30.930.10">
    <property type="entry name" value="Bira Bifunctional Protein, Domain 2"/>
    <property type="match status" value="1"/>
</dbReference>
<dbReference type="HAMAP" id="MF_00127">
    <property type="entry name" value="His_tRNA_synth"/>
    <property type="match status" value="1"/>
</dbReference>
<dbReference type="InterPro" id="IPR006195">
    <property type="entry name" value="aa-tRNA-synth_II"/>
</dbReference>
<dbReference type="InterPro" id="IPR045864">
    <property type="entry name" value="aa-tRNA-synth_II/BPL/LPL"/>
</dbReference>
<dbReference type="InterPro" id="IPR004154">
    <property type="entry name" value="Anticodon-bd"/>
</dbReference>
<dbReference type="InterPro" id="IPR036621">
    <property type="entry name" value="Anticodon-bd_dom_sf"/>
</dbReference>
<dbReference type="InterPro" id="IPR015807">
    <property type="entry name" value="His-tRNA-ligase"/>
</dbReference>
<dbReference type="InterPro" id="IPR041715">
    <property type="entry name" value="HisRS-like_core"/>
</dbReference>
<dbReference type="InterPro" id="IPR004516">
    <property type="entry name" value="HisRS/HisZ"/>
</dbReference>
<dbReference type="InterPro" id="IPR033656">
    <property type="entry name" value="HisRS_anticodon"/>
</dbReference>
<dbReference type="NCBIfam" id="TIGR00442">
    <property type="entry name" value="hisS"/>
    <property type="match status" value="1"/>
</dbReference>
<dbReference type="PANTHER" id="PTHR43707:SF1">
    <property type="entry name" value="HISTIDINE--TRNA LIGASE, MITOCHONDRIAL-RELATED"/>
    <property type="match status" value="1"/>
</dbReference>
<dbReference type="PANTHER" id="PTHR43707">
    <property type="entry name" value="HISTIDYL-TRNA SYNTHETASE"/>
    <property type="match status" value="1"/>
</dbReference>
<dbReference type="Pfam" id="PF03129">
    <property type="entry name" value="HGTP_anticodon"/>
    <property type="match status" value="1"/>
</dbReference>
<dbReference type="Pfam" id="PF13393">
    <property type="entry name" value="tRNA-synt_His"/>
    <property type="match status" value="1"/>
</dbReference>
<dbReference type="PIRSF" id="PIRSF001549">
    <property type="entry name" value="His-tRNA_synth"/>
    <property type="match status" value="1"/>
</dbReference>
<dbReference type="SUPFAM" id="SSF52954">
    <property type="entry name" value="Class II aaRS ABD-related"/>
    <property type="match status" value="1"/>
</dbReference>
<dbReference type="SUPFAM" id="SSF55681">
    <property type="entry name" value="Class II aaRS and biotin synthetases"/>
    <property type="match status" value="1"/>
</dbReference>
<dbReference type="PROSITE" id="PS50862">
    <property type="entry name" value="AA_TRNA_LIGASE_II"/>
    <property type="match status" value="1"/>
</dbReference>
<evidence type="ECO:0000255" key="1">
    <source>
        <dbReference type="HAMAP-Rule" id="MF_00127"/>
    </source>
</evidence>
<name>SYH_DESHD</name>
<organism>
    <name type="scientific">Desulfitobacterium hafniense (strain DSM 10664 / DCB-2)</name>
    <dbReference type="NCBI Taxonomy" id="272564"/>
    <lineage>
        <taxon>Bacteria</taxon>
        <taxon>Bacillati</taxon>
        <taxon>Bacillota</taxon>
        <taxon>Clostridia</taxon>
        <taxon>Eubacteriales</taxon>
        <taxon>Desulfitobacteriaceae</taxon>
        <taxon>Desulfitobacterium</taxon>
    </lineage>
</organism>
<reference key="1">
    <citation type="journal article" date="2012" name="BMC Microbiol.">
        <title>Genome sequence of Desulfitobacterium hafniense DCB-2, a Gram-positive anaerobe capable of dehalogenation and metal reduction.</title>
        <authorList>
            <person name="Kim S.H."/>
            <person name="Harzman C."/>
            <person name="Davis J.K."/>
            <person name="Hutcheson R."/>
            <person name="Broderick J.B."/>
            <person name="Marsh T.L."/>
            <person name="Tiedje J.M."/>
        </authorList>
    </citation>
    <scope>NUCLEOTIDE SEQUENCE [LARGE SCALE GENOMIC DNA]</scope>
    <source>
        <strain>DSM 10664 / DCB-2</strain>
    </source>
</reference>
<protein>
    <recommendedName>
        <fullName evidence="1">Histidine--tRNA ligase</fullName>
        <ecNumber evidence="1">6.1.1.21</ecNumber>
    </recommendedName>
    <alternativeName>
        <fullName evidence="1">Histidyl-tRNA synthetase</fullName>
        <shortName evidence="1">HisRS</shortName>
    </alternativeName>
</protein>
<comment type="catalytic activity">
    <reaction evidence="1">
        <text>tRNA(His) + L-histidine + ATP = L-histidyl-tRNA(His) + AMP + diphosphate + H(+)</text>
        <dbReference type="Rhea" id="RHEA:17313"/>
        <dbReference type="Rhea" id="RHEA-COMP:9665"/>
        <dbReference type="Rhea" id="RHEA-COMP:9689"/>
        <dbReference type="ChEBI" id="CHEBI:15378"/>
        <dbReference type="ChEBI" id="CHEBI:30616"/>
        <dbReference type="ChEBI" id="CHEBI:33019"/>
        <dbReference type="ChEBI" id="CHEBI:57595"/>
        <dbReference type="ChEBI" id="CHEBI:78442"/>
        <dbReference type="ChEBI" id="CHEBI:78527"/>
        <dbReference type="ChEBI" id="CHEBI:456215"/>
        <dbReference type="EC" id="6.1.1.21"/>
    </reaction>
</comment>
<comment type="subunit">
    <text evidence="1">Homodimer.</text>
</comment>
<comment type="subcellular location">
    <subcellularLocation>
        <location evidence="1">Cytoplasm</location>
    </subcellularLocation>
</comment>
<comment type="similarity">
    <text evidence="1">Belongs to the class-II aminoacyl-tRNA synthetase family.</text>
</comment>
<proteinExistence type="inferred from homology"/>